<protein>
    <recommendedName>
        <fullName evidence="1">DNA gyrase inhibitor YacG</fullName>
    </recommendedName>
</protein>
<proteinExistence type="inferred from homology"/>
<dbReference type="EMBL" id="AE017180">
    <property type="protein sequence ID" value="AAR34594.2"/>
    <property type="molecule type" value="Genomic_DNA"/>
</dbReference>
<dbReference type="RefSeq" id="NP_952271.2">
    <property type="nucleotide sequence ID" value="NC_002939.5"/>
</dbReference>
<dbReference type="RefSeq" id="WP_010941875.1">
    <property type="nucleotide sequence ID" value="NC_002939.5"/>
</dbReference>
<dbReference type="SMR" id="Q74DU7"/>
<dbReference type="FunCoup" id="Q74DU7">
    <property type="interactions" value="57"/>
</dbReference>
<dbReference type="STRING" id="243231.GSU1218"/>
<dbReference type="EnsemblBacteria" id="AAR34594">
    <property type="protein sequence ID" value="AAR34594"/>
    <property type="gene ID" value="GSU1218"/>
</dbReference>
<dbReference type="KEGG" id="gsu:GSU1218"/>
<dbReference type="PATRIC" id="fig|243231.5.peg.1213"/>
<dbReference type="eggNOG" id="COG3024">
    <property type="taxonomic scope" value="Bacteria"/>
</dbReference>
<dbReference type="HOGENOM" id="CLU_178280_3_2_7"/>
<dbReference type="InParanoid" id="Q74DU7"/>
<dbReference type="OrthoDB" id="9809663at2"/>
<dbReference type="Proteomes" id="UP000000577">
    <property type="component" value="Chromosome"/>
</dbReference>
<dbReference type="GO" id="GO:0008657">
    <property type="term" value="F:DNA topoisomerase type II (double strand cut, ATP-hydrolyzing) inhibitor activity"/>
    <property type="evidence" value="ECO:0000318"/>
    <property type="project" value="GO_Central"/>
</dbReference>
<dbReference type="GO" id="GO:0008270">
    <property type="term" value="F:zinc ion binding"/>
    <property type="evidence" value="ECO:0007669"/>
    <property type="project" value="InterPro"/>
</dbReference>
<dbReference type="GO" id="GO:0006355">
    <property type="term" value="P:regulation of DNA-templated transcription"/>
    <property type="evidence" value="ECO:0007669"/>
    <property type="project" value="InterPro"/>
</dbReference>
<dbReference type="Gene3D" id="3.30.50.10">
    <property type="entry name" value="Erythroid Transcription Factor GATA-1, subunit A"/>
    <property type="match status" value="1"/>
</dbReference>
<dbReference type="HAMAP" id="MF_00649">
    <property type="entry name" value="DNA_gyrase_inhibitor_YacG"/>
    <property type="match status" value="1"/>
</dbReference>
<dbReference type="InterPro" id="IPR005584">
    <property type="entry name" value="DNA_gyrase_inhibitor_YacG"/>
</dbReference>
<dbReference type="InterPro" id="IPR013088">
    <property type="entry name" value="Znf_NHR/GATA"/>
</dbReference>
<dbReference type="PANTHER" id="PTHR36150">
    <property type="entry name" value="DNA GYRASE INHIBITOR YACG"/>
    <property type="match status" value="1"/>
</dbReference>
<dbReference type="PANTHER" id="PTHR36150:SF1">
    <property type="entry name" value="DNA GYRASE INHIBITOR YACG"/>
    <property type="match status" value="1"/>
</dbReference>
<dbReference type="Pfam" id="PF03884">
    <property type="entry name" value="YacG"/>
    <property type="match status" value="1"/>
</dbReference>
<dbReference type="SUPFAM" id="SSF57716">
    <property type="entry name" value="Glucocorticoid receptor-like (DNA-binding domain)"/>
    <property type="match status" value="1"/>
</dbReference>
<accession>Q74DU7</accession>
<name>YACG_GEOSL</name>
<reference key="1">
    <citation type="journal article" date="2003" name="Science">
        <title>Genome of Geobacter sulfurreducens: metal reduction in subsurface environments.</title>
        <authorList>
            <person name="Methe B.A."/>
            <person name="Nelson K.E."/>
            <person name="Eisen J.A."/>
            <person name="Paulsen I.T."/>
            <person name="Nelson W.C."/>
            <person name="Heidelberg J.F."/>
            <person name="Wu D."/>
            <person name="Wu M."/>
            <person name="Ward N.L."/>
            <person name="Beanan M.J."/>
            <person name="Dodson R.J."/>
            <person name="Madupu R."/>
            <person name="Brinkac L.M."/>
            <person name="Daugherty S.C."/>
            <person name="DeBoy R.T."/>
            <person name="Durkin A.S."/>
            <person name="Gwinn M.L."/>
            <person name="Kolonay J.F."/>
            <person name="Sullivan S.A."/>
            <person name="Haft D.H."/>
            <person name="Selengut J."/>
            <person name="Davidsen T.M."/>
            <person name="Zafar N."/>
            <person name="White O."/>
            <person name="Tran B."/>
            <person name="Romero C."/>
            <person name="Forberger H.A."/>
            <person name="Weidman J.F."/>
            <person name="Khouri H.M."/>
            <person name="Feldblyum T.V."/>
            <person name="Utterback T.R."/>
            <person name="Van Aken S.E."/>
            <person name="Lovley D.R."/>
            <person name="Fraser C.M."/>
        </authorList>
    </citation>
    <scope>NUCLEOTIDE SEQUENCE [LARGE SCALE GENOMIC DNA]</scope>
    <source>
        <strain>ATCC 51573 / DSM 12127 / PCA</strain>
    </source>
</reference>
<gene>
    <name evidence="1" type="primary">yacG</name>
    <name type="ordered locus">GSU1218</name>
</gene>
<feature type="chain" id="PRO_0000211699" description="DNA gyrase inhibitor YacG">
    <location>
        <begin position="1"/>
        <end position="59"/>
    </location>
</feature>
<feature type="binding site" evidence="1">
    <location>
        <position position="7"/>
    </location>
    <ligand>
        <name>Zn(2+)</name>
        <dbReference type="ChEBI" id="CHEBI:29105"/>
    </ligand>
</feature>
<feature type="binding site" evidence="1">
    <location>
        <position position="10"/>
    </location>
    <ligand>
        <name>Zn(2+)</name>
        <dbReference type="ChEBI" id="CHEBI:29105"/>
    </ligand>
</feature>
<feature type="binding site" evidence="1">
    <location>
        <position position="25"/>
    </location>
    <ligand>
        <name>Zn(2+)</name>
        <dbReference type="ChEBI" id="CHEBI:29105"/>
    </ligand>
</feature>
<feature type="binding site" evidence="1">
    <location>
        <position position="29"/>
    </location>
    <ligand>
        <name>Zn(2+)</name>
        <dbReference type="ChEBI" id="CHEBI:29105"/>
    </ligand>
</feature>
<keyword id="KW-0479">Metal-binding</keyword>
<keyword id="KW-1185">Reference proteome</keyword>
<keyword id="KW-0862">Zinc</keyword>
<evidence type="ECO:0000255" key="1">
    <source>
        <dbReference type="HAMAP-Rule" id="MF_00649"/>
    </source>
</evidence>
<sequence length="59" mass="6696">MITTLTCPRCRAETVWEGNPHRPFCSARCKTVDLAAWADEEYRIAGPEAPSDNDENDRE</sequence>
<organism>
    <name type="scientific">Geobacter sulfurreducens (strain ATCC 51573 / DSM 12127 / PCA)</name>
    <dbReference type="NCBI Taxonomy" id="243231"/>
    <lineage>
        <taxon>Bacteria</taxon>
        <taxon>Pseudomonadati</taxon>
        <taxon>Thermodesulfobacteriota</taxon>
        <taxon>Desulfuromonadia</taxon>
        <taxon>Geobacterales</taxon>
        <taxon>Geobacteraceae</taxon>
        <taxon>Geobacter</taxon>
    </lineage>
</organism>
<comment type="function">
    <text evidence="1">Inhibits all the catalytic activities of DNA gyrase by preventing its interaction with DNA. Acts by binding directly to the C-terminal domain of GyrB, which probably disrupts DNA binding by the gyrase.</text>
</comment>
<comment type="cofactor">
    <cofactor evidence="1">
        <name>Zn(2+)</name>
        <dbReference type="ChEBI" id="CHEBI:29105"/>
    </cofactor>
    <text evidence="1">Binds 1 zinc ion.</text>
</comment>
<comment type="subunit">
    <text evidence="1">Interacts with GyrB.</text>
</comment>
<comment type="similarity">
    <text evidence="1">Belongs to the DNA gyrase inhibitor YacG family.</text>
</comment>